<accession>A0A1E1FFN5</accession>
<protein>
    <recommendedName>
        <fullName evidence="5">Methyltransferase prhM</fullName>
        <ecNumber evidence="7">2.1.3.-</ecNumber>
    </recommendedName>
    <alternativeName>
        <fullName evidence="5">Paraherquonin biosynthesis cluster protein M</fullName>
    </alternativeName>
</protein>
<keyword id="KW-0489">Methyltransferase</keyword>
<keyword id="KW-0949">S-adenosyl-L-methionine</keyword>
<keyword id="KW-0808">Transferase</keyword>
<evidence type="ECO:0000250" key="1">
    <source>
        <dbReference type="UniProtKB" id="Q3J7D1"/>
    </source>
</evidence>
<evidence type="ECO:0000250" key="2">
    <source>
        <dbReference type="UniProtKB" id="Q5ATJ7"/>
    </source>
</evidence>
<evidence type="ECO:0000269" key="3">
    <source>
    </source>
</evidence>
<evidence type="ECO:0000269" key="4">
    <source>
    </source>
</evidence>
<evidence type="ECO:0000303" key="5">
    <source>
    </source>
</evidence>
<evidence type="ECO:0000305" key="6"/>
<evidence type="ECO:0000305" key="7">
    <source>
    </source>
</evidence>
<evidence type="ECO:0000305" key="8">
    <source>
    </source>
</evidence>
<evidence type="ECO:0000305" key="9">
    <source>
    </source>
</evidence>
<dbReference type="EC" id="2.1.3.-" evidence="7"/>
<dbReference type="EMBL" id="LC127182">
    <property type="protein sequence ID" value="BAV69314.1"/>
    <property type="molecule type" value="Genomic_DNA"/>
</dbReference>
<dbReference type="SMR" id="A0A1E1FFN5"/>
<dbReference type="UniPathway" id="UPA00213"/>
<dbReference type="GO" id="GO:0008168">
    <property type="term" value="F:methyltransferase activity"/>
    <property type="evidence" value="ECO:0007669"/>
    <property type="project" value="UniProtKB-KW"/>
</dbReference>
<dbReference type="GO" id="GO:0032259">
    <property type="term" value="P:methylation"/>
    <property type="evidence" value="ECO:0007669"/>
    <property type="project" value="UniProtKB-KW"/>
</dbReference>
<dbReference type="GO" id="GO:0016114">
    <property type="term" value="P:terpenoid biosynthetic process"/>
    <property type="evidence" value="ECO:0007669"/>
    <property type="project" value="UniProtKB-UniPathway"/>
</dbReference>
<dbReference type="Gene3D" id="3.40.50.150">
    <property type="entry name" value="Vaccinia Virus protein VP39"/>
    <property type="match status" value="1"/>
</dbReference>
<dbReference type="InterPro" id="IPR051654">
    <property type="entry name" value="Meroterpenoid_MTases"/>
</dbReference>
<dbReference type="InterPro" id="IPR029063">
    <property type="entry name" value="SAM-dependent_MTases_sf"/>
</dbReference>
<dbReference type="PANTHER" id="PTHR35897">
    <property type="entry name" value="METHYLTRANSFERASE AUSD"/>
    <property type="match status" value="1"/>
</dbReference>
<dbReference type="PANTHER" id="PTHR35897:SF1">
    <property type="entry name" value="METHYLTRANSFERASE AUSD"/>
    <property type="match status" value="1"/>
</dbReference>
<dbReference type="SUPFAM" id="SSF53335">
    <property type="entry name" value="S-adenosyl-L-methionine-dependent methyltransferases"/>
    <property type="match status" value="1"/>
</dbReference>
<feature type="chain" id="PRO_0000449177" description="Methyltransferase prhM">
    <location>
        <begin position="1"/>
        <end position="279"/>
    </location>
</feature>
<feature type="binding site" evidence="1">
    <location>
        <begin position="124"/>
        <end position="125"/>
    </location>
    <ligand>
        <name>S-adenosyl-L-methionine</name>
        <dbReference type="ChEBI" id="CHEBI:59789"/>
    </ligand>
</feature>
<feature type="binding site" evidence="1">
    <location>
        <begin position="152"/>
        <end position="153"/>
    </location>
    <ligand>
        <name>S-adenosyl-L-methionine</name>
        <dbReference type="ChEBI" id="CHEBI:59789"/>
    </ligand>
</feature>
<comment type="function">
    <text evidence="2 3 4 7 8 9">Methyltransferase; part of the gene cluster that mediates the biosynthesis of paraherquonin, a meroterpenoid with a unique, highly congested hexacyclic molecular architecture (PubMed:27602587). The first step of the pathway is the synthesis of 3,5-dimethylorsellinic acid (DMOA) by the polyketide synthase prhL (By similarity). Synthesis of DMOA is followed by farnesylation by the prenyltransferase prhE, methylesterification by the methyl-transferase prhM, epoxidation of the prenyl chain by the flavin-dependent monooxygenase prhF, and cyclization of the farnesyl moiety by the terpene cyclase prhH, to yield the tetracyclic intermediate, protoaustinoid A (By similarity). The short chain dehydrogenase prhI then oxidizes the C-3 alcohol group of the terpene cyclase product to transform protoaustinoid A into protoaustinoid B (PubMed:27602587). The FAD-binding monooxygenase prhJ catalyzes the oxidation of protoaustinoid B into preaustinoid A which is further oxidized into preaustinoid A1 by FAD-binding monooxygenase phrK (PubMed:27602587). Finally, prhA leads to berkeleydione via the berkeleyone B intermediate (PubMed:27602587, PubMed:29317628). PrhA is a multifunctional dioxygenase that first desaturates at C5-C6 to form berkeleyone B, followed by rearrangement of the A/B-ring to form the cycloheptadiene moiety in berkeleydione (PubMed:27602587, PubMed:29317628). Berkeleydione serves as the key intermediate for the biosynthesis of paraherquonin as well as many other meroterpenoids (Probable). The cytochrome P450 monooxygenases prhB, prhD, and prhN, as well as the isomerase prhC, are probably involved in the late stage of paraherquonin biosynthesis, after the production of berkeleydione (Probable). Especially prhC might be a multifunctional enzyme that catalyzes the D-ring expansion via intramolecular methoxy rearrangement, as well as the hydrolysis of the expanded D-ring (Probable).</text>
</comment>
<comment type="pathway">
    <text evidence="7">Secondary metabolite biosynthesis; terpenoid biosynthesis.</text>
</comment>
<comment type="similarity">
    <text evidence="6">Belongs to the class I-like SAM-binding methyltransferase superfamily.</text>
</comment>
<organism>
    <name type="scientific">Penicillium brasilianum</name>
    <dbReference type="NCBI Taxonomy" id="104259"/>
    <lineage>
        <taxon>Eukaryota</taxon>
        <taxon>Fungi</taxon>
        <taxon>Dikarya</taxon>
        <taxon>Ascomycota</taxon>
        <taxon>Pezizomycotina</taxon>
        <taxon>Eurotiomycetes</taxon>
        <taxon>Eurotiomycetidae</taxon>
        <taxon>Eurotiales</taxon>
        <taxon>Aspergillaceae</taxon>
        <taxon>Penicillium</taxon>
    </lineage>
</organism>
<proteinExistence type="inferred from homology"/>
<name>PRHM_PENBI</name>
<reference key="1">
    <citation type="journal article" date="2016" name="J. Am. Chem. Soc.">
        <title>Discovery of key dioxygenases that diverged the paraherquonin and acetoxydehydroaustin pathways in Penicillium brasilianum.</title>
        <authorList>
            <person name="Matsuda Y."/>
            <person name="Iwabuchi T."/>
            <person name="Fujimoto T."/>
            <person name="Awakawa T."/>
            <person name="Nakashima Y."/>
            <person name="Mori T."/>
            <person name="Zhang H."/>
            <person name="Hayashi F."/>
            <person name="Abe I."/>
        </authorList>
    </citation>
    <scope>NUCLEOTIDE SEQUENCE [GENOMIC DNA]</scope>
    <scope>FUNCTION</scope>
    <scope>PATHWAY</scope>
    <source>
        <strain>ATCC 22354 / NBRC 6234 / CBS 338.59 / FRR 3454 / IMI 68220</strain>
    </source>
</reference>
<reference key="2">
    <citation type="journal article" date="2017" name="Nat. Chem. Biol.">
        <title>Molecular basis for the unusual ring reconstruction in fungal meroterpenoid biogenesis.</title>
        <authorList>
            <person name="Mori T."/>
            <person name="Iwabuchi T."/>
            <person name="Hoshino S."/>
            <person name="Wang H."/>
            <person name="Matsuda Y."/>
            <person name="Abe I."/>
        </authorList>
    </citation>
    <scope>FUNCTION</scope>
</reference>
<reference key="3">
    <citation type="journal article" date="2018" name="Nat. Commun.">
        <title>Structure function and engineering of multifunctional non-heme iron dependent oxygenases in fungal meroterpenoid biosynthesis.</title>
        <authorList>
            <person name="Nakashima Y."/>
            <person name="Mori T."/>
            <person name="Nakamura H."/>
            <person name="Awakawa T."/>
            <person name="Hoshino S."/>
            <person name="Senda M."/>
            <person name="Senda T."/>
            <person name="Abe I."/>
        </authorList>
    </citation>
    <scope>FUNCTION</scope>
</reference>
<sequence>MHPDAQLKTALKNGFDPKLLYKEPLTTVKEPVCSILEKHSKVPVDKVVSHVNEVRDRAFAVFPYACIGQFSFVELSIADSPCYREMLERTKQGHKLLDLGCAFGQELRQLIYDGTPPTNLYGSDIQQDFLSLGYELFLDRAILPDSQLIAADVLDKQSALFQRLAGELNIVYISLFLHVFDFEKQITVAQNVLDLLKAEPGSMIVCRVTACRDQEVLAATQERMPYYYHDLASWNRLWEEVQKQTGVKLSVESWEQPDELVKKHPLPGIYILGSSIRRL</sequence>
<gene>
    <name evidence="5" type="primary">prhM</name>
</gene>